<sequence>MREFGNPLGDRPPLDELARTDLLLDALAEREEVDFADPRDDALAALLGQWRDDLRWPPASALVSQDEAVAALRAGVAQRRRARRSLAAVGSVAAALLVLSGFGAVVADARPGDLLYGLHAMMFNRSRVSDDQIVLSAKANLAKVEQMIAQGQWAEAQDELAEVSSTVQAVTDGSRRQDLINEVNLLNTKVETRDPNATLRPGSPSNPAAPGSVGNSWTPLAPVVEPPTPPTPASAAEPSMSAGVSESPMPNSTSTVAASPSTPSSKPEPGSIDPSLEPADEATNPAGQPAPETPVSPTH</sequence>
<proteinExistence type="inferred from homology"/>
<evidence type="ECO:0000250" key="1"/>
<evidence type="ECO:0000255" key="2"/>
<evidence type="ECO:0000256" key="3">
    <source>
        <dbReference type="SAM" id="MobiDB-lite"/>
    </source>
</evidence>
<evidence type="ECO:0000305" key="4"/>
<accession>P9WJ70</accession>
<accession>L0TFJ3</accession>
<accession>P65081</accession>
<accession>Q50713</accession>
<comment type="function">
    <text evidence="1">An anti-sigma factor for extracytoplasmic function (ECF) sigma factor SigD. ECF sigma factors are held in an inactive form by an anti-sigma factor until released by regulated intramembrane proteolysis (RIP). RIP occurs when an extracytoplasmic signal triggers a concerted proteolytic cascade to transmit information and elicit cellular responses. The membrane-spanning regulatory substrate protein is first cut extracytoplasmically (site-1 protease, S1P), then within the membrane itself (site-2 protease, S2P), while cytoplasmic proteases finish degrading the regulatory protein, liberating the sigma factor. Neither S1P nor S2P proteases have been so far identified for this anti-sigma factor (By similarity).</text>
</comment>
<comment type="subunit">
    <text evidence="1">Interacts with ECF RNA polymerase sigma factor SigD; this should inhibit the interaction of SigD with the RNA polymerase catalytic core.</text>
</comment>
<comment type="subcellular location">
    <subcellularLocation>
        <location evidence="4">Cell membrane</location>
        <topology evidence="4">Single-pass membrane protein</topology>
    </subcellularLocation>
</comment>
<reference key="1">
    <citation type="journal article" date="2002" name="J. Bacteriol.">
        <title>Whole-genome comparison of Mycobacterium tuberculosis clinical and laboratory strains.</title>
        <authorList>
            <person name="Fleischmann R.D."/>
            <person name="Alland D."/>
            <person name="Eisen J.A."/>
            <person name="Carpenter L."/>
            <person name="White O."/>
            <person name="Peterson J.D."/>
            <person name="DeBoy R.T."/>
            <person name="Dodson R.J."/>
            <person name="Gwinn M.L."/>
            <person name="Haft D.H."/>
            <person name="Hickey E.K."/>
            <person name="Kolonay J.F."/>
            <person name="Nelson W.C."/>
            <person name="Umayam L.A."/>
            <person name="Ermolaeva M.D."/>
            <person name="Salzberg S.L."/>
            <person name="Delcher A."/>
            <person name="Utterback T.R."/>
            <person name="Weidman J.F."/>
            <person name="Khouri H.M."/>
            <person name="Gill J."/>
            <person name="Mikula A."/>
            <person name="Bishai W."/>
            <person name="Jacobs W.R. Jr."/>
            <person name="Venter J.C."/>
            <person name="Fraser C.M."/>
        </authorList>
    </citation>
    <scope>NUCLEOTIDE SEQUENCE [LARGE SCALE GENOMIC DNA]</scope>
    <source>
        <strain>CDC 1551 / Oshkosh</strain>
    </source>
</reference>
<feature type="chain" id="PRO_0000427881" description="Anti-sigma-D factor RsdA">
    <location>
        <begin position="1"/>
        <end position="299"/>
    </location>
</feature>
<feature type="topological domain" description="Cytoplasmic" evidence="2">
    <location>
        <begin position="1"/>
        <end position="85"/>
    </location>
</feature>
<feature type="transmembrane region" description="Helical" evidence="2">
    <location>
        <begin position="86"/>
        <end position="106"/>
    </location>
</feature>
<feature type="topological domain" description="Extracellular" evidence="2">
    <location>
        <begin position="107"/>
        <end position="299"/>
    </location>
</feature>
<feature type="region of interest" description="Interaction with sigma factor" evidence="1">
    <location>
        <begin position="24"/>
        <end position="50"/>
    </location>
</feature>
<feature type="region of interest" description="Disordered" evidence="3">
    <location>
        <begin position="187"/>
        <end position="299"/>
    </location>
</feature>
<feature type="compositionally biased region" description="Low complexity" evidence="3">
    <location>
        <begin position="201"/>
        <end position="212"/>
    </location>
</feature>
<feature type="compositionally biased region" description="Low complexity" evidence="3">
    <location>
        <begin position="250"/>
        <end position="271"/>
    </location>
</feature>
<gene>
    <name type="primary">rsdA</name>
    <name type="ordered locus">MT3522</name>
</gene>
<dbReference type="EMBL" id="AE000516">
    <property type="protein sequence ID" value="AAK47860.1"/>
    <property type="molecule type" value="Genomic_DNA"/>
</dbReference>
<dbReference type="PIR" id="B70737">
    <property type="entry name" value="B70737"/>
</dbReference>
<dbReference type="RefSeq" id="WP_003418011.1">
    <property type="nucleotide sequence ID" value="NZ_KK341227.1"/>
</dbReference>
<dbReference type="SMR" id="P9WJ70"/>
<dbReference type="KEGG" id="mtc:MT3522"/>
<dbReference type="PATRIC" id="fig|83331.31.peg.3779"/>
<dbReference type="HOGENOM" id="CLU_059914_0_0_11"/>
<dbReference type="Proteomes" id="UP000001020">
    <property type="component" value="Chromosome"/>
</dbReference>
<dbReference type="GO" id="GO:0005886">
    <property type="term" value="C:plasma membrane"/>
    <property type="evidence" value="ECO:0007669"/>
    <property type="project" value="UniProtKB-SubCell"/>
</dbReference>
<dbReference type="Gene3D" id="6.10.250.1300">
    <property type="match status" value="1"/>
</dbReference>
<dbReference type="InterPro" id="IPR031928">
    <property type="entry name" value="RsdA_SigD-bd"/>
</dbReference>
<dbReference type="Pfam" id="PF16751">
    <property type="entry name" value="RsdA_SigD_bd"/>
    <property type="match status" value="1"/>
</dbReference>
<organism>
    <name type="scientific">Mycobacterium tuberculosis (strain CDC 1551 / Oshkosh)</name>
    <dbReference type="NCBI Taxonomy" id="83331"/>
    <lineage>
        <taxon>Bacteria</taxon>
        <taxon>Bacillati</taxon>
        <taxon>Actinomycetota</taxon>
        <taxon>Actinomycetes</taxon>
        <taxon>Mycobacteriales</taxon>
        <taxon>Mycobacteriaceae</taxon>
        <taxon>Mycobacterium</taxon>
        <taxon>Mycobacterium tuberculosis complex</taxon>
    </lineage>
</organism>
<protein>
    <recommendedName>
        <fullName>Anti-sigma-D factor RsdA</fullName>
    </recommendedName>
    <alternativeName>
        <fullName>Regulator of SigD</fullName>
    </alternativeName>
    <alternativeName>
        <fullName>Sigma-D anti-sigma factor RsdA</fullName>
    </alternativeName>
</protein>
<name>RSDA_MYCTO</name>
<keyword id="KW-1003">Cell membrane</keyword>
<keyword id="KW-0472">Membrane</keyword>
<keyword id="KW-1185">Reference proteome</keyword>
<keyword id="KW-0804">Transcription</keyword>
<keyword id="KW-0805">Transcription regulation</keyword>
<keyword id="KW-0812">Transmembrane</keyword>
<keyword id="KW-1133">Transmembrane helix</keyword>